<keyword id="KW-0963">Cytoplasm</keyword>
<keyword id="KW-0385">Hypusine</keyword>
<keyword id="KW-0396">Initiation factor</keyword>
<keyword id="KW-0648">Protein biosynthesis</keyword>
<keyword id="KW-1185">Reference proteome</keyword>
<sequence>MAGTKPSELGALKVGQYVVIDGIACRVMDTAHSKPGKHGGAKVRLTAMGIFEPVKKEHVGPASSRIDVPLIDKRKGQVLALMGEHVQIMDLETYETLELPMPTDVEGIDSGVEVEYFEAMDRYKITRVISK</sequence>
<protein>
    <recommendedName>
        <fullName evidence="1">Translation initiation factor 5A</fullName>
    </recommendedName>
    <alternativeName>
        <fullName evidence="1">Hypusine-containing protein</fullName>
    </alternativeName>
    <alternativeName>
        <fullName evidence="1">eIF-5A</fullName>
    </alternativeName>
</protein>
<feature type="chain" id="PRO_0000259436" description="Translation initiation factor 5A">
    <location>
        <begin position="1"/>
        <end position="131"/>
    </location>
</feature>
<feature type="modified residue" description="Hypusine" evidence="1">
    <location>
        <position position="37"/>
    </location>
</feature>
<reference key="1">
    <citation type="journal article" date="2004" name="J. Bacteriol.">
        <title>Complete genome sequence of the genetically tractable hydrogenotrophic methanogen Methanococcus maripaludis.</title>
        <authorList>
            <person name="Hendrickson E.L."/>
            <person name="Kaul R."/>
            <person name="Zhou Y."/>
            <person name="Bovee D."/>
            <person name="Chapman P."/>
            <person name="Chung J."/>
            <person name="Conway de Macario E."/>
            <person name="Dodsworth J.A."/>
            <person name="Gillett W."/>
            <person name="Graham D.E."/>
            <person name="Hackett M."/>
            <person name="Haydock A.K."/>
            <person name="Kang A."/>
            <person name="Land M.L."/>
            <person name="Levy R."/>
            <person name="Lie T.J."/>
            <person name="Major T.A."/>
            <person name="Moore B.C."/>
            <person name="Porat I."/>
            <person name="Palmeiri A."/>
            <person name="Rouse G."/>
            <person name="Saenphimmachak C."/>
            <person name="Soell D."/>
            <person name="Van Dien S."/>
            <person name="Wang T."/>
            <person name="Whitman W.B."/>
            <person name="Xia Q."/>
            <person name="Zhang Y."/>
            <person name="Larimer F.W."/>
            <person name="Olson M.V."/>
            <person name="Leigh J.A."/>
        </authorList>
    </citation>
    <scope>NUCLEOTIDE SEQUENCE [LARGE SCALE GENOMIC DNA]</scope>
    <source>
        <strain>DSM 14266 / JCM 13030 / NBRC 101832 / S2 / LL</strain>
    </source>
</reference>
<accession>Q6LYN8</accession>
<comment type="function">
    <text evidence="1">Functions by promoting the formation of the first peptide bond.</text>
</comment>
<comment type="subcellular location">
    <subcellularLocation>
        <location evidence="1">Cytoplasm</location>
    </subcellularLocation>
</comment>
<comment type="similarity">
    <text evidence="1">Belongs to the eIF-5A family.</text>
</comment>
<gene>
    <name evidence="1" type="primary">eif5a</name>
    <name type="ordered locus">MMP0952</name>
</gene>
<organism>
    <name type="scientific">Methanococcus maripaludis (strain DSM 14266 / JCM 13030 / NBRC 101832 / S2 / LL)</name>
    <dbReference type="NCBI Taxonomy" id="267377"/>
    <lineage>
        <taxon>Archaea</taxon>
        <taxon>Methanobacteriati</taxon>
        <taxon>Methanobacteriota</taxon>
        <taxon>Methanomada group</taxon>
        <taxon>Methanococci</taxon>
        <taxon>Methanococcales</taxon>
        <taxon>Methanococcaceae</taxon>
        <taxon>Methanococcus</taxon>
    </lineage>
</organism>
<dbReference type="EMBL" id="BX950229">
    <property type="protein sequence ID" value="CAF30508.1"/>
    <property type="molecule type" value="Genomic_DNA"/>
</dbReference>
<dbReference type="RefSeq" id="WP_011170896.1">
    <property type="nucleotide sequence ID" value="NC_005791.1"/>
</dbReference>
<dbReference type="SMR" id="Q6LYN8"/>
<dbReference type="STRING" id="267377.MMP0952"/>
<dbReference type="EnsemblBacteria" id="CAF30508">
    <property type="protein sequence ID" value="CAF30508"/>
    <property type="gene ID" value="MMP0952"/>
</dbReference>
<dbReference type="KEGG" id="mmp:MMP0952"/>
<dbReference type="PATRIC" id="fig|267377.15.peg.980"/>
<dbReference type="eggNOG" id="arCOG04277">
    <property type="taxonomic scope" value="Archaea"/>
</dbReference>
<dbReference type="HOGENOM" id="CLU_102600_3_0_2"/>
<dbReference type="OrthoDB" id="23689at2157"/>
<dbReference type="Proteomes" id="UP000000590">
    <property type="component" value="Chromosome"/>
</dbReference>
<dbReference type="GO" id="GO:0005737">
    <property type="term" value="C:cytoplasm"/>
    <property type="evidence" value="ECO:0007669"/>
    <property type="project" value="UniProtKB-SubCell"/>
</dbReference>
<dbReference type="GO" id="GO:0043022">
    <property type="term" value="F:ribosome binding"/>
    <property type="evidence" value="ECO:0007669"/>
    <property type="project" value="InterPro"/>
</dbReference>
<dbReference type="GO" id="GO:0003723">
    <property type="term" value="F:RNA binding"/>
    <property type="evidence" value="ECO:0007669"/>
    <property type="project" value="InterPro"/>
</dbReference>
<dbReference type="GO" id="GO:0003746">
    <property type="term" value="F:translation elongation factor activity"/>
    <property type="evidence" value="ECO:0007669"/>
    <property type="project" value="InterPro"/>
</dbReference>
<dbReference type="GO" id="GO:0003743">
    <property type="term" value="F:translation initiation factor activity"/>
    <property type="evidence" value="ECO:0007669"/>
    <property type="project" value="UniProtKB-UniRule"/>
</dbReference>
<dbReference type="GO" id="GO:0045901">
    <property type="term" value="P:positive regulation of translational elongation"/>
    <property type="evidence" value="ECO:0007669"/>
    <property type="project" value="InterPro"/>
</dbReference>
<dbReference type="GO" id="GO:0045905">
    <property type="term" value="P:positive regulation of translational termination"/>
    <property type="evidence" value="ECO:0007669"/>
    <property type="project" value="InterPro"/>
</dbReference>
<dbReference type="CDD" id="cd04467">
    <property type="entry name" value="S1_aIF5A"/>
    <property type="match status" value="1"/>
</dbReference>
<dbReference type="Gene3D" id="2.30.30.30">
    <property type="match status" value="1"/>
</dbReference>
<dbReference type="Gene3D" id="2.40.50.140">
    <property type="entry name" value="Nucleic acid-binding proteins"/>
    <property type="match status" value="1"/>
</dbReference>
<dbReference type="HAMAP" id="MF_00085">
    <property type="entry name" value="eIF_5A"/>
    <property type="match status" value="1"/>
</dbReference>
<dbReference type="InterPro" id="IPR001884">
    <property type="entry name" value="IF5A-like"/>
</dbReference>
<dbReference type="InterPro" id="IPR048670">
    <property type="entry name" value="IF5A-like_N"/>
</dbReference>
<dbReference type="InterPro" id="IPR012340">
    <property type="entry name" value="NA-bd_OB-fold"/>
</dbReference>
<dbReference type="InterPro" id="IPR014722">
    <property type="entry name" value="Rib_uL2_dom2"/>
</dbReference>
<dbReference type="InterPro" id="IPR019769">
    <property type="entry name" value="Trans_elong_IF5A_hypusine_site"/>
</dbReference>
<dbReference type="InterPro" id="IPR022847">
    <property type="entry name" value="Transl_elong_IF5A_arc"/>
</dbReference>
<dbReference type="InterPro" id="IPR020189">
    <property type="entry name" value="Transl_elong_IF5A_C"/>
</dbReference>
<dbReference type="InterPro" id="IPR008991">
    <property type="entry name" value="Translation_prot_SH3-like_sf"/>
</dbReference>
<dbReference type="NCBIfam" id="TIGR00037">
    <property type="entry name" value="eIF_5A"/>
    <property type="match status" value="1"/>
</dbReference>
<dbReference type="NCBIfam" id="NF003076">
    <property type="entry name" value="PRK03999.1"/>
    <property type="match status" value="1"/>
</dbReference>
<dbReference type="PANTHER" id="PTHR11673">
    <property type="entry name" value="TRANSLATION INITIATION FACTOR 5A FAMILY MEMBER"/>
    <property type="match status" value="1"/>
</dbReference>
<dbReference type="Pfam" id="PF21485">
    <property type="entry name" value="IF5A-like_N"/>
    <property type="match status" value="1"/>
</dbReference>
<dbReference type="PIRSF" id="PIRSF003025">
    <property type="entry name" value="eIF5A"/>
    <property type="match status" value="1"/>
</dbReference>
<dbReference type="SMART" id="SM01376">
    <property type="entry name" value="eIF-5a"/>
    <property type="match status" value="1"/>
</dbReference>
<dbReference type="SUPFAM" id="SSF50249">
    <property type="entry name" value="Nucleic acid-binding proteins"/>
    <property type="match status" value="1"/>
</dbReference>
<dbReference type="SUPFAM" id="SSF50104">
    <property type="entry name" value="Translation proteins SH3-like domain"/>
    <property type="match status" value="1"/>
</dbReference>
<dbReference type="PROSITE" id="PS00302">
    <property type="entry name" value="IF5A_HYPUSINE"/>
    <property type="match status" value="1"/>
</dbReference>
<name>IF5A_METMP</name>
<evidence type="ECO:0000255" key="1">
    <source>
        <dbReference type="HAMAP-Rule" id="MF_00085"/>
    </source>
</evidence>
<proteinExistence type="inferred from homology"/>